<gene>
    <name evidence="1" type="primary">nrdR</name>
    <name type="ordered locus">Mext_3169</name>
</gene>
<feature type="chain" id="PRO_1000124521" description="Transcriptional repressor NrdR">
    <location>
        <begin position="1"/>
        <end position="185"/>
    </location>
</feature>
<feature type="domain" description="ATP-cone" evidence="1">
    <location>
        <begin position="49"/>
        <end position="139"/>
    </location>
</feature>
<feature type="zinc finger region" evidence="1">
    <location>
        <begin position="3"/>
        <end position="34"/>
    </location>
</feature>
<feature type="region of interest" description="Disordered" evidence="2">
    <location>
        <begin position="1"/>
        <end position="24"/>
    </location>
</feature>
<feature type="region of interest" description="Disordered" evidence="2">
    <location>
        <begin position="149"/>
        <end position="185"/>
    </location>
</feature>
<feature type="compositionally biased region" description="Basic and acidic residues" evidence="2">
    <location>
        <begin position="12"/>
        <end position="24"/>
    </location>
</feature>
<feature type="compositionally biased region" description="Basic residues" evidence="2">
    <location>
        <begin position="176"/>
        <end position="185"/>
    </location>
</feature>
<dbReference type="EMBL" id="CP000908">
    <property type="protein sequence ID" value="ABY31557.1"/>
    <property type="molecule type" value="Genomic_DNA"/>
</dbReference>
<dbReference type="RefSeq" id="WP_012254463.1">
    <property type="nucleotide sequence ID" value="NC_010172.1"/>
</dbReference>
<dbReference type="SMR" id="A9VYW5"/>
<dbReference type="KEGG" id="mex:Mext_3169"/>
<dbReference type="eggNOG" id="COG1327">
    <property type="taxonomic scope" value="Bacteria"/>
</dbReference>
<dbReference type="HOGENOM" id="CLU_108412_0_1_5"/>
<dbReference type="BioCyc" id="MEXT419610:MEXT_RS15930-MONOMER"/>
<dbReference type="GO" id="GO:0005524">
    <property type="term" value="F:ATP binding"/>
    <property type="evidence" value="ECO:0007669"/>
    <property type="project" value="UniProtKB-KW"/>
</dbReference>
<dbReference type="GO" id="GO:0003677">
    <property type="term" value="F:DNA binding"/>
    <property type="evidence" value="ECO:0007669"/>
    <property type="project" value="UniProtKB-KW"/>
</dbReference>
<dbReference type="GO" id="GO:0008270">
    <property type="term" value="F:zinc ion binding"/>
    <property type="evidence" value="ECO:0007669"/>
    <property type="project" value="UniProtKB-UniRule"/>
</dbReference>
<dbReference type="GO" id="GO:0045892">
    <property type="term" value="P:negative regulation of DNA-templated transcription"/>
    <property type="evidence" value="ECO:0007669"/>
    <property type="project" value="UniProtKB-UniRule"/>
</dbReference>
<dbReference type="HAMAP" id="MF_00440">
    <property type="entry name" value="NrdR"/>
    <property type="match status" value="1"/>
</dbReference>
<dbReference type="InterPro" id="IPR005144">
    <property type="entry name" value="ATP-cone_dom"/>
</dbReference>
<dbReference type="InterPro" id="IPR055173">
    <property type="entry name" value="NrdR-like_N"/>
</dbReference>
<dbReference type="InterPro" id="IPR003796">
    <property type="entry name" value="RNR_NrdR-like"/>
</dbReference>
<dbReference type="NCBIfam" id="TIGR00244">
    <property type="entry name" value="transcriptional regulator NrdR"/>
    <property type="match status" value="1"/>
</dbReference>
<dbReference type="PANTHER" id="PTHR30455">
    <property type="entry name" value="TRANSCRIPTIONAL REPRESSOR NRDR"/>
    <property type="match status" value="1"/>
</dbReference>
<dbReference type="PANTHER" id="PTHR30455:SF2">
    <property type="entry name" value="TRANSCRIPTIONAL REPRESSOR NRDR"/>
    <property type="match status" value="1"/>
</dbReference>
<dbReference type="Pfam" id="PF03477">
    <property type="entry name" value="ATP-cone"/>
    <property type="match status" value="1"/>
</dbReference>
<dbReference type="Pfam" id="PF22811">
    <property type="entry name" value="Zn_ribbon_NrdR"/>
    <property type="match status" value="1"/>
</dbReference>
<dbReference type="PROSITE" id="PS51161">
    <property type="entry name" value="ATP_CONE"/>
    <property type="match status" value="1"/>
</dbReference>
<comment type="function">
    <text evidence="1">Negatively regulates transcription of bacterial ribonucleotide reductase nrd genes and operons by binding to NrdR-boxes.</text>
</comment>
<comment type="cofactor">
    <cofactor evidence="1">
        <name>Zn(2+)</name>
        <dbReference type="ChEBI" id="CHEBI:29105"/>
    </cofactor>
    <text evidence="1">Binds 1 zinc ion.</text>
</comment>
<comment type="similarity">
    <text evidence="1">Belongs to the NrdR family.</text>
</comment>
<evidence type="ECO:0000255" key="1">
    <source>
        <dbReference type="HAMAP-Rule" id="MF_00440"/>
    </source>
</evidence>
<evidence type="ECO:0000256" key="2">
    <source>
        <dbReference type="SAM" id="MobiDB-lite"/>
    </source>
</evidence>
<protein>
    <recommendedName>
        <fullName evidence="1">Transcriptional repressor NrdR</fullName>
    </recommendedName>
</protein>
<proteinExistence type="inferred from homology"/>
<keyword id="KW-0067">ATP-binding</keyword>
<keyword id="KW-0238">DNA-binding</keyword>
<keyword id="KW-0479">Metal-binding</keyword>
<keyword id="KW-0547">Nucleotide-binding</keyword>
<keyword id="KW-0678">Repressor</keyword>
<keyword id="KW-0804">Transcription</keyword>
<keyword id="KW-0805">Transcription regulation</keyword>
<keyword id="KW-0862">Zinc</keyword>
<keyword id="KW-0863">Zinc-finger</keyword>
<name>NRDR_METEP</name>
<reference key="1">
    <citation type="submission" date="2007-12" db="EMBL/GenBank/DDBJ databases">
        <title>Complete sequence of Methylobacterium extorquens PA1.</title>
        <authorList>
            <consortium name="US DOE Joint Genome Institute"/>
            <person name="Copeland A."/>
            <person name="Lucas S."/>
            <person name="Lapidus A."/>
            <person name="Barry K."/>
            <person name="Glavina del Rio T."/>
            <person name="Dalin E."/>
            <person name="Tice H."/>
            <person name="Pitluck S."/>
            <person name="Saunders E."/>
            <person name="Brettin T."/>
            <person name="Bruce D."/>
            <person name="Detter J.C."/>
            <person name="Han C."/>
            <person name="Schmutz J."/>
            <person name="Larimer F."/>
            <person name="Land M."/>
            <person name="Hauser L."/>
            <person name="Kyrpides N."/>
            <person name="Kim E."/>
            <person name="Marx C."/>
            <person name="Richardson P."/>
        </authorList>
    </citation>
    <scope>NUCLEOTIDE SEQUENCE [LARGE SCALE GENOMIC DNA]</scope>
    <source>
        <strain>PA1</strain>
    </source>
</reference>
<accession>A9VYW5</accession>
<organism>
    <name type="scientific">Methylorubrum extorquens (strain PA1)</name>
    <name type="common">Methylobacterium extorquens</name>
    <dbReference type="NCBI Taxonomy" id="419610"/>
    <lineage>
        <taxon>Bacteria</taxon>
        <taxon>Pseudomonadati</taxon>
        <taxon>Pseudomonadota</taxon>
        <taxon>Alphaproteobacteria</taxon>
        <taxon>Hyphomicrobiales</taxon>
        <taxon>Methylobacteriaceae</taxon>
        <taxon>Methylorubrum</taxon>
    </lineage>
</organism>
<sequence>MRCPFCGGPDTQVKDSRPSEDSSAIRRRRVCPDCGGRFTTFERVQLRELVVLKRSGKRVPFDRDKLQRSIDVALRKRTVDPERVERLVSGITRRLESGGEGEVTSEAIGEAVMEGLKGLDDVAYVRFASVYKNFREAQDFQDLLGTLGERLEGEGDLPEDGEAAPAPPDEVVAAPRRGRPARKRA</sequence>